<dbReference type="EMBL" id="CP000912">
    <property type="protein sequence ID" value="ABY40207.1"/>
    <property type="molecule type" value="Genomic_DNA"/>
</dbReference>
<dbReference type="RefSeq" id="WP_006074552.1">
    <property type="nucleotide sequence ID" value="NC_010167.1"/>
</dbReference>
<dbReference type="SMR" id="A9WWS1"/>
<dbReference type="KEGG" id="bmt:BSUIS_B1274"/>
<dbReference type="HOGENOM" id="CLU_084338_2_1_5"/>
<dbReference type="Proteomes" id="UP000008545">
    <property type="component" value="Chromosome II"/>
</dbReference>
<dbReference type="GO" id="GO:0005886">
    <property type="term" value="C:plasma membrane"/>
    <property type="evidence" value="ECO:0007669"/>
    <property type="project" value="UniProtKB-SubCell"/>
</dbReference>
<dbReference type="GO" id="GO:0045259">
    <property type="term" value="C:proton-transporting ATP synthase complex"/>
    <property type="evidence" value="ECO:0007669"/>
    <property type="project" value="UniProtKB-KW"/>
</dbReference>
<dbReference type="GO" id="GO:0005524">
    <property type="term" value="F:ATP binding"/>
    <property type="evidence" value="ECO:0007669"/>
    <property type="project" value="UniProtKB-UniRule"/>
</dbReference>
<dbReference type="GO" id="GO:0046933">
    <property type="term" value="F:proton-transporting ATP synthase activity, rotational mechanism"/>
    <property type="evidence" value="ECO:0007669"/>
    <property type="project" value="UniProtKB-UniRule"/>
</dbReference>
<dbReference type="CDD" id="cd12152">
    <property type="entry name" value="F1-ATPase_delta"/>
    <property type="match status" value="1"/>
</dbReference>
<dbReference type="Gene3D" id="2.60.15.10">
    <property type="entry name" value="F0F1 ATP synthase delta/epsilon subunit, N-terminal"/>
    <property type="match status" value="1"/>
</dbReference>
<dbReference type="HAMAP" id="MF_00530">
    <property type="entry name" value="ATP_synth_epsil_bac"/>
    <property type="match status" value="1"/>
</dbReference>
<dbReference type="InterPro" id="IPR001469">
    <property type="entry name" value="ATP_synth_F1_dsu/esu"/>
</dbReference>
<dbReference type="InterPro" id="IPR020546">
    <property type="entry name" value="ATP_synth_F1_dsu/esu_N"/>
</dbReference>
<dbReference type="InterPro" id="IPR036771">
    <property type="entry name" value="ATPsynth_dsu/esu_N"/>
</dbReference>
<dbReference type="NCBIfam" id="TIGR01216">
    <property type="entry name" value="ATP_synt_epsi"/>
    <property type="match status" value="1"/>
</dbReference>
<dbReference type="NCBIfam" id="NF001851">
    <property type="entry name" value="PRK00571.2-4"/>
    <property type="match status" value="1"/>
</dbReference>
<dbReference type="PANTHER" id="PTHR13822">
    <property type="entry name" value="ATP SYNTHASE DELTA/EPSILON CHAIN"/>
    <property type="match status" value="1"/>
</dbReference>
<dbReference type="PANTHER" id="PTHR13822:SF10">
    <property type="entry name" value="ATP SYNTHASE EPSILON CHAIN, CHLOROPLASTIC"/>
    <property type="match status" value="1"/>
</dbReference>
<dbReference type="Pfam" id="PF02823">
    <property type="entry name" value="ATP-synt_DE_N"/>
    <property type="match status" value="1"/>
</dbReference>
<dbReference type="SUPFAM" id="SSF51344">
    <property type="entry name" value="Epsilon subunit of F1F0-ATP synthase N-terminal domain"/>
    <property type="match status" value="1"/>
</dbReference>
<feature type="chain" id="PRO_1000081725" description="ATP synthase epsilon chain">
    <location>
        <begin position="1"/>
        <end position="135"/>
    </location>
</feature>
<name>ATPE_BRUSI</name>
<comment type="function">
    <text evidence="1">Produces ATP from ADP in the presence of a proton gradient across the membrane.</text>
</comment>
<comment type="subunit">
    <text evidence="1">F-type ATPases have 2 components, CF(1) - the catalytic core - and CF(0) - the membrane proton channel. CF(1) has five subunits: alpha(3), beta(3), gamma(1), delta(1), epsilon(1). CF(0) has three main subunits: a, b and c.</text>
</comment>
<comment type="subcellular location">
    <subcellularLocation>
        <location evidence="1">Cell inner membrane</location>
        <topology evidence="1">Peripheral membrane protein</topology>
    </subcellularLocation>
</comment>
<comment type="similarity">
    <text evidence="1">Belongs to the ATPase epsilon chain family.</text>
</comment>
<proteinExistence type="inferred from homology"/>
<organism>
    <name type="scientific">Brucella suis (strain ATCC 23445 / NCTC 10510)</name>
    <dbReference type="NCBI Taxonomy" id="470137"/>
    <lineage>
        <taxon>Bacteria</taxon>
        <taxon>Pseudomonadati</taxon>
        <taxon>Pseudomonadota</taxon>
        <taxon>Alphaproteobacteria</taxon>
        <taxon>Hyphomicrobiales</taxon>
        <taxon>Brucellaceae</taxon>
        <taxon>Brucella/Ochrobactrum group</taxon>
        <taxon>Brucella</taxon>
    </lineage>
</organism>
<protein>
    <recommendedName>
        <fullName evidence="1">ATP synthase epsilon chain</fullName>
    </recommendedName>
    <alternativeName>
        <fullName evidence="1">ATP synthase F1 sector epsilon subunit</fullName>
    </alternativeName>
    <alternativeName>
        <fullName evidence="1">F-ATPase epsilon subunit</fullName>
    </alternativeName>
</protein>
<gene>
    <name evidence="1" type="primary">atpC</name>
    <name type="ordered locus">BSUIS_B1274</name>
</gene>
<reference key="1">
    <citation type="submission" date="2007-12" db="EMBL/GenBank/DDBJ databases">
        <title>Brucella suis ATCC 23445 whole genome shotgun sequencing project.</title>
        <authorList>
            <person name="Setubal J.C."/>
            <person name="Bowns C."/>
            <person name="Boyle S."/>
            <person name="Crasta O.R."/>
            <person name="Czar M.J."/>
            <person name="Dharmanolla C."/>
            <person name="Gillespie J.J."/>
            <person name="Kenyon R.W."/>
            <person name="Lu J."/>
            <person name="Mane S."/>
            <person name="Mohapatra S."/>
            <person name="Nagrani S."/>
            <person name="Purkayastha A."/>
            <person name="Rajasimha H.K."/>
            <person name="Shallom J.M."/>
            <person name="Shallom S."/>
            <person name="Shukla M."/>
            <person name="Snyder E.E."/>
            <person name="Sobral B.W."/>
            <person name="Wattam A.R."/>
            <person name="Will R."/>
            <person name="Williams K."/>
            <person name="Yoo H."/>
            <person name="Bruce D."/>
            <person name="Detter C."/>
            <person name="Munk C."/>
            <person name="Brettin T.S."/>
        </authorList>
    </citation>
    <scope>NUCLEOTIDE SEQUENCE [LARGE SCALE GENOMIC DNA]</scope>
    <source>
        <strain>ATCC 23445 / NCTC 10510</strain>
    </source>
</reference>
<keyword id="KW-0066">ATP synthesis</keyword>
<keyword id="KW-0997">Cell inner membrane</keyword>
<keyword id="KW-1003">Cell membrane</keyword>
<keyword id="KW-0139">CF(1)</keyword>
<keyword id="KW-0375">Hydrogen ion transport</keyword>
<keyword id="KW-0406">Ion transport</keyword>
<keyword id="KW-0472">Membrane</keyword>
<keyword id="KW-0813">Transport</keyword>
<evidence type="ECO:0000255" key="1">
    <source>
        <dbReference type="HAMAP-Rule" id="MF_00530"/>
    </source>
</evidence>
<sequence length="135" mass="14509">MAQAFQFELVSPERLLLSAQVTEVVIPGNEGYLTALAGHSPLMTTIMPGVVSVKLADGKTDSYVVFGGFADITPQGCTVLAESATHVDDIDPADIQHRIDHARKVLEDASSNEHRTKAEIFLHQLMTLQGAILPA</sequence>
<accession>A9WWS1</accession>